<evidence type="ECO:0000255" key="1">
    <source>
        <dbReference type="HAMAP-Rule" id="MF_01454"/>
    </source>
</evidence>
<evidence type="ECO:0000255" key="2">
    <source>
        <dbReference type="PROSITE-ProRule" id="PRU01231"/>
    </source>
</evidence>
<organism>
    <name type="scientific">Acinetobacter baylyi (strain ATCC 33305 / BD413 / ADP1)</name>
    <dbReference type="NCBI Taxonomy" id="62977"/>
    <lineage>
        <taxon>Bacteria</taxon>
        <taxon>Pseudomonadati</taxon>
        <taxon>Pseudomonadota</taxon>
        <taxon>Gammaproteobacteria</taxon>
        <taxon>Moraxellales</taxon>
        <taxon>Moraxellaceae</taxon>
        <taxon>Acinetobacter</taxon>
    </lineage>
</organism>
<dbReference type="EC" id="3.6.5.-" evidence="1"/>
<dbReference type="EMBL" id="CR543861">
    <property type="protein sequence ID" value="CAG69326.1"/>
    <property type="molecule type" value="Genomic_DNA"/>
</dbReference>
<dbReference type="SMR" id="Q6F9D8"/>
<dbReference type="STRING" id="202950.GCA_001485005_01456"/>
<dbReference type="GeneID" id="45234845"/>
<dbReference type="KEGG" id="aci:ACIAD2561"/>
<dbReference type="eggNOG" id="COG0536">
    <property type="taxonomic scope" value="Bacteria"/>
</dbReference>
<dbReference type="HOGENOM" id="CLU_011747_2_0_6"/>
<dbReference type="OrthoDB" id="9807318at2"/>
<dbReference type="BioCyc" id="ASP62977:ACIAD_RS11640-MONOMER"/>
<dbReference type="Proteomes" id="UP000000430">
    <property type="component" value="Chromosome"/>
</dbReference>
<dbReference type="GO" id="GO:0005737">
    <property type="term" value="C:cytoplasm"/>
    <property type="evidence" value="ECO:0007669"/>
    <property type="project" value="UniProtKB-SubCell"/>
</dbReference>
<dbReference type="GO" id="GO:0005525">
    <property type="term" value="F:GTP binding"/>
    <property type="evidence" value="ECO:0007669"/>
    <property type="project" value="UniProtKB-UniRule"/>
</dbReference>
<dbReference type="GO" id="GO:0003924">
    <property type="term" value="F:GTPase activity"/>
    <property type="evidence" value="ECO:0007669"/>
    <property type="project" value="UniProtKB-UniRule"/>
</dbReference>
<dbReference type="GO" id="GO:0000287">
    <property type="term" value="F:magnesium ion binding"/>
    <property type="evidence" value="ECO:0007669"/>
    <property type="project" value="InterPro"/>
</dbReference>
<dbReference type="GO" id="GO:0042254">
    <property type="term" value="P:ribosome biogenesis"/>
    <property type="evidence" value="ECO:0007669"/>
    <property type="project" value="UniProtKB-UniRule"/>
</dbReference>
<dbReference type="CDD" id="cd01898">
    <property type="entry name" value="Obg"/>
    <property type="match status" value="1"/>
</dbReference>
<dbReference type="FunFam" id="2.70.210.12:FF:000001">
    <property type="entry name" value="GTPase Obg"/>
    <property type="match status" value="1"/>
</dbReference>
<dbReference type="Gene3D" id="2.70.210.12">
    <property type="entry name" value="GTP1/OBG domain"/>
    <property type="match status" value="1"/>
</dbReference>
<dbReference type="Gene3D" id="3.40.50.300">
    <property type="entry name" value="P-loop containing nucleotide triphosphate hydrolases"/>
    <property type="match status" value="1"/>
</dbReference>
<dbReference type="HAMAP" id="MF_01454">
    <property type="entry name" value="GTPase_Obg"/>
    <property type="match status" value="1"/>
</dbReference>
<dbReference type="InterPro" id="IPR031167">
    <property type="entry name" value="G_OBG"/>
</dbReference>
<dbReference type="InterPro" id="IPR006073">
    <property type="entry name" value="GTP-bd"/>
</dbReference>
<dbReference type="InterPro" id="IPR014100">
    <property type="entry name" value="GTP-bd_Obg/CgtA"/>
</dbReference>
<dbReference type="InterPro" id="IPR006074">
    <property type="entry name" value="GTP1-OBG_CS"/>
</dbReference>
<dbReference type="InterPro" id="IPR006169">
    <property type="entry name" value="GTP1_OBG_dom"/>
</dbReference>
<dbReference type="InterPro" id="IPR036726">
    <property type="entry name" value="GTP1_OBG_dom_sf"/>
</dbReference>
<dbReference type="InterPro" id="IPR045086">
    <property type="entry name" value="OBG_GTPase"/>
</dbReference>
<dbReference type="InterPro" id="IPR027417">
    <property type="entry name" value="P-loop_NTPase"/>
</dbReference>
<dbReference type="NCBIfam" id="TIGR02729">
    <property type="entry name" value="Obg_CgtA"/>
    <property type="match status" value="1"/>
</dbReference>
<dbReference type="NCBIfam" id="NF008955">
    <property type="entry name" value="PRK12297.1"/>
    <property type="match status" value="1"/>
</dbReference>
<dbReference type="NCBIfam" id="NF008956">
    <property type="entry name" value="PRK12299.1"/>
    <property type="match status" value="1"/>
</dbReference>
<dbReference type="PANTHER" id="PTHR11702">
    <property type="entry name" value="DEVELOPMENTALLY REGULATED GTP-BINDING PROTEIN-RELATED"/>
    <property type="match status" value="1"/>
</dbReference>
<dbReference type="PANTHER" id="PTHR11702:SF31">
    <property type="entry name" value="MITOCHONDRIAL RIBOSOME-ASSOCIATED GTPASE 2"/>
    <property type="match status" value="1"/>
</dbReference>
<dbReference type="Pfam" id="PF01018">
    <property type="entry name" value="GTP1_OBG"/>
    <property type="match status" value="1"/>
</dbReference>
<dbReference type="Pfam" id="PF01926">
    <property type="entry name" value="MMR_HSR1"/>
    <property type="match status" value="1"/>
</dbReference>
<dbReference type="PIRSF" id="PIRSF002401">
    <property type="entry name" value="GTP_bd_Obg/CgtA"/>
    <property type="match status" value="1"/>
</dbReference>
<dbReference type="PRINTS" id="PR00326">
    <property type="entry name" value="GTP1OBG"/>
</dbReference>
<dbReference type="SUPFAM" id="SSF82051">
    <property type="entry name" value="Obg GTP-binding protein N-terminal domain"/>
    <property type="match status" value="1"/>
</dbReference>
<dbReference type="SUPFAM" id="SSF52540">
    <property type="entry name" value="P-loop containing nucleoside triphosphate hydrolases"/>
    <property type="match status" value="1"/>
</dbReference>
<dbReference type="PROSITE" id="PS51710">
    <property type="entry name" value="G_OBG"/>
    <property type="match status" value="1"/>
</dbReference>
<dbReference type="PROSITE" id="PS00905">
    <property type="entry name" value="GTP1_OBG"/>
    <property type="match status" value="1"/>
</dbReference>
<dbReference type="PROSITE" id="PS51883">
    <property type="entry name" value="OBG"/>
    <property type="match status" value="1"/>
</dbReference>
<protein>
    <recommendedName>
        <fullName evidence="1">GTPase Obg</fullName>
        <ecNumber evidence="1">3.6.5.-</ecNumber>
    </recommendedName>
    <alternativeName>
        <fullName evidence="1">GTP-binding protein Obg</fullName>
    </alternativeName>
</protein>
<sequence length="400" mass="43800">MRFVDEAVITVEAGDGGNGVASFRREKFVPFGGPDGGDGGRGGSVYIQADDDTGTLVDYRYTRKFRAERGKNGAGANCTGRGGEDVVLKVPVGTTIVDVESGDIIGDLVEDGQRVMVATGGDGGLGNTHFKSSTNRSPRKFTTGVKGEFREIRLELKVLADVGLLGMPNAGKSTFIRAVSAAKPKVADYPFTTMVPNLGVVDADRHRSFVMADIPGLIEGAAEGAGLGIRFLKHLARTRILLHIVDVQPIDGSDPVHNAKAIVGELKKFSPTLAELPVVLVLNKLDQIDEANREEWCQHILTELEWTGPVFRTSGLLLEGTKEVVYYLMDQIEQQRELEAEDPEYARKVKAFREQLEAETREQTIAAKEAYRAMRKAQREADQDDDFDDDDDEVEVIYVR</sequence>
<keyword id="KW-0963">Cytoplasm</keyword>
<keyword id="KW-0342">GTP-binding</keyword>
<keyword id="KW-0378">Hydrolase</keyword>
<keyword id="KW-0460">Magnesium</keyword>
<keyword id="KW-0479">Metal-binding</keyword>
<keyword id="KW-0547">Nucleotide-binding</keyword>
<proteinExistence type="inferred from homology"/>
<gene>
    <name evidence="1" type="primary">obg</name>
    <name type="ordered locus">ACIAD2561</name>
</gene>
<feature type="chain" id="PRO_0000385671" description="GTPase Obg">
    <location>
        <begin position="1"/>
        <end position="400"/>
    </location>
</feature>
<feature type="domain" description="Obg" evidence="2">
    <location>
        <begin position="1"/>
        <end position="159"/>
    </location>
</feature>
<feature type="domain" description="OBG-type G" evidence="1">
    <location>
        <begin position="160"/>
        <end position="333"/>
    </location>
</feature>
<feature type="binding site" evidence="1">
    <location>
        <begin position="166"/>
        <end position="173"/>
    </location>
    <ligand>
        <name>GTP</name>
        <dbReference type="ChEBI" id="CHEBI:37565"/>
    </ligand>
</feature>
<feature type="binding site" evidence="1">
    <location>
        <position position="173"/>
    </location>
    <ligand>
        <name>Mg(2+)</name>
        <dbReference type="ChEBI" id="CHEBI:18420"/>
    </ligand>
</feature>
<feature type="binding site" evidence="1">
    <location>
        <begin position="191"/>
        <end position="195"/>
    </location>
    <ligand>
        <name>GTP</name>
        <dbReference type="ChEBI" id="CHEBI:37565"/>
    </ligand>
</feature>
<feature type="binding site" evidence="1">
    <location>
        <position position="193"/>
    </location>
    <ligand>
        <name>Mg(2+)</name>
        <dbReference type="ChEBI" id="CHEBI:18420"/>
    </ligand>
</feature>
<feature type="binding site" evidence="1">
    <location>
        <begin position="213"/>
        <end position="216"/>
    </location>
    <ligand>
        <name>GTP</name>
        <dbReference type="ChEBI" id="CHEBI:37565"/>
    </ligand>
</feature>
<feature type="binding site" evidence="1">
    <location>
        <begin position="283"/>
        <end position="286"/>
    </location>
    <ligand>
        <name>GTP</name>
        <dbReference type="ChEBI" id="CHEBI:37565"/>
    </ligand>
</feature>
<feature type="binding site" evidence="1">
    <location>
        <begin position="314"/>
        <end position="316"/>
    </location>
    <ligand>
        <name>GTP</name>
        <dbReference type="ChEBI" id="CHEBI:37565"/>
    </ligand>
</feature>
<reference key="1">
    <citation type="journal article" date="2004" name="Nucleic Acids Res.">
        <title>Unique features revealed by the genome sequence of Acinetobacter sp. ADP1, a versatile and naturally transformation competent bacterium.</title>
        <authorList>
            <person name="Barbe V."/>
            <person name="Vallenet D."/>
            <person name="Fonknechten N."/>
            <person name="Kreimeyer A."/>
            <person name="Oztas S."/>
            <person name="Labarre L."/>
            <person name="Cruveiller S."/>
            <person name="Robert C."/>
            <person name="Duprat S."/>
            <person name="Wincker P."/>
            <person name="Ornston L.N."/>
            <person name="Weissenbach J."/>
            <person name="Marliere P."/>
            <person name="Cohen G.N."/>
            <person name="Medigue C."/>
        </authorList>
    </citation>
    <scope>NUCLEOTIDE SEQUENCE [LARGE SCALE GENOMIC DNA]</scope>
    <source>
        <strain>ATCC 33305 / BD413 / ADP1</strain>
    </source>
</reference>
<name>OBG_ACIAD</name>
<accession>Q6F9D8</accession>
<comment type="function">
    <text evidence="1">An essential GTPase which binds GTP, GDP and possibly (p)ppGpp with moderate affinity, with high nucleotide exchange rates and a fairly low GTP hydrolysis rate. Plays a role in control of the cell cycle, stress response, ribosome biogenesis and in those bacteria that undergo differentiation, in morphogenesis control.</text>
</comment>
<comment type="cofactor">
    <cofactor evidence="1">
        <name>Mg(2+)</name>
        <dbReference type="ChEBI" id="CHEBI:18420"/>
    </cofactor>
</comment>
<comment type="subunit">
    <text evidence="1">Monomer.</text>
</comment>
<comment type="subcellular location">
    <subcellularLocation>
        <location evidence="1">Cytoplasm</location>
    </subcellularLocation>
</comment>
<comment type="similarity">
    <text evidence="1">Belongs to the TRAFAC class OBG-HflX-like GTPase superfamily. OBG GTPase family.</text>
</comment>